<accession>A7GZ69</accession>
<gene>
    <name evidence="1" type="primary">rpmB</name>
    <name type="ordered locus">Ccur92_12070</name>
    <name type="ORF">CCV52592_0722</name>
</gene>
<dbReference type="EMBL" id="CP000767">
    <property type="protein sequence ID" value="EAU00423.1"/>
    <property type="molecule type" value="Genomic_DNA"/>
</dbReference>
<dbReference type="RefSeq" id="WP_009651385.1">
    <property type="nucleotide sequence ID" value="NC_009715.2"/>
</dbReference>
<dbReference type="SMR" id="A7GZ69"/>
<dbReference type="STRING" id="360105.CCV52592_0722"/>
<dbReference type="GeneID" id="61002510"/>
<dbReference type="KEGG" id="ccv:CCV52592_0722"/>
<dbReference type="HOGENOM" id="CLU_064548_7_2_7"/>
<dbReference type="OrthoDB" id="9805609at2"/>
<dbReference type="Proteomes" id="UP000006380">
    <property type="component" value="Chromosome"/>
</dbReference>
<dbReference type="GO" id="GO:1990904">
    <property type="term" value="C:ribonucleoprotein complex"/>
    <property type="evidence" value="ECO:0007669"/>
    <property type="project" value="UniProtKB-KW"/>
</dbReference>
<dbReference type="GO" id="GO:0005840">
    <property type="term" value="C:ribosome"/>
    <property type="evidence" value="ECO:0007669"/>
    <property type="project" value="UniProtKB-KW"/>
</dbReference>
<dbReference type="GO" id="GO:0003735">
    <property type="term" value="F:structural constituent of ribosome"/>
    <property type="evidence" value="ECO:0007669"/>
    <property type="project" value="InterPro"/>
</dbReference>
<dbReference type="GO" id="GO:0006412">
    <property type="term" value="P:translation"/>
    <property type="evidence" value="ECO:0007669"/>
    <property type="project" value="UniProtKB-UniRule"/>
</dbReference>
<dbReference type="Gene3D" id="2.20.150.30">
    <property type="match status" value="1"/>
</dbReference>
<dbReference type="Gene3D" id="2.30.170.40">
    <property type="entry name" value="Ribosomal protein L28/L24"/>
    <property type="match status" value="1"/>
</dbReference>
<dbReference type="HAMAP" id="MF_00373">
    <property type="entry name" value="Ribosomal_bL28"/>
    <property type="match status" value="1"/>
</dbReference>
<dbReference type="InterPro" id="IPR050096">
    <property type="entry name" value="Bacterial_rp_bL28"/>
</dbReference>
<dbReference type="InterPro" id="IPR026569">
    <property type="entry name" value="Ribosomal_bL28"/>
</dbReference>
<dbReference type="InterPro" id="IPR034704">
    <property type="entry name" value="Ribosomal_bL28/bL31-like_sf"/>
</dbReference>
<dbReference type="InterPro" id="IPR001383">
    <property type="entry name" value="Ribosomal_bL28_bact-type"/>
</dbReference>
<dbReference type="InterPro" id="IPR037147">
    <property type="entry name" value="Ribosomal_bL28_sf"/>
</dbReference>
<dbReference type="NCBIfam" id="TIGR00009">
    <property type="entry name" value="L28"/>
    <property type="match status" value="1"/>
</dbReference>
<dbReference type="PANTHER" id="PTHR39080">
    <property type="entry name" value="50S RIBOSOMAL PROTEIN L28"/>
    <property type="match status" value="1"/>
</dbReference>
<dbReference type="PANTHER" id="PTHR39080:SF1">
    <property type="entry name" value="LARGE RIBOSOMAL SUBUNIT PROTEIN BL28A"/>
    <property type="match status" value="1"/>
</dbReference>
<dbReference type="Pfam" id="PF00830">
    <property type="entry name" value="Ribosomal_L28"/>
    <property type="match status" value="1"/>
</dbReference>
<dbReference type="SUPFAM" id="SSF143800">
    <property type="entry name" value="L28p-like"/>
    <property type="match status" value="1"/>
</dbReference>
<name>RL28_CAMC5</name>
<reference key="1">
    <citation type="submission" date="2007-07" db="EMBL/GenBank/DDBJ databases">
        <title>Genome sequence of Campylobacter curvus 525.92 isolated from human feces.</title>
        <authorList>
            <person name="Fouts D.E."/>
            <person name="Mongodin E.F."/>
            <person name="Puiu D."/>
            <person name="Sebastian Y."/>
            <person name="Miller W.G."/>
            <person name="Mandrell R.E."/>
            <person name="Lastovica A.J."/>
            <person name="Nelson K.E."/>
        </authorList>
    </citation>
    <scope>NUCLEOTIDE SEQUENCE [LARGE SCALE GENOMIC DNA]</scope>
    <source>
        <strain>525.92</strain>
    </source>
</reference>
<evidence type="ECO:0000255" key="1">
    <source>
        <dbReference type="HAMAP-Rule" id="MF_00373"/>
    </source>
</evidence>
<evidence type="ECO:0000256" key="2">
    <source>
        <dbReference type="SAM" id="MobiDB-lite"/>
    </source>
</evidence>
<evidence type="ECO:0000305" key="3"/>
<organism>
    <name type="scientific">Campylobacter curvus (strain 525.92)</name>
    <dbReference type="NCBI Taxonomy" id="360105"/>
    <lineage>
        <taxon>Bacteria</taxon>
        <taxon>Pseudomonadati</taxon>
        <taxon>Campylobacterota</taxon>
        <taxon>Epsilonproteobacteria</taxon>
        <taxon>Campylobacterales</taxon>
        <taxon>Campylobacteraceae</taxon>
        <taxon>Campylobacter</taxon>
    </lineage>
</organism>
<protein>
    <recommendedName>
        <fullName evidence="1">Large ribosomal subunit protein bL28</fullName>
    </recommendedName>
    <alternativeName>
        <fullName evidence="3">50S ribosomal protein L28</fullName>
    </alternativeName>
</protein>
<keyword id="KW-1185">Reference proteome</keyword>
<keyword id="KW-0687">Ribonucleoprotein</keyword>
<keyword id="KW-0689">Ribosomal protein</keyword>
<feature type="chain" id="PRO_1000007198" description="Large ribosomal subunit protein bL28">
    <location>
        <begin position="1"/>
        <end position="63"/>
    </location>
</feature>
<feature type="region of interest" description="Disordered" evidence="2">
    <location>
        <begin position="1"/>
        <end position="20"/>
    </location>
</feature>
<comment type="similarity">
    <text evidence="1">Belongs to the bacterial ribosomal protein bL28 family.</text>
</comment>
<sequence length="63" mass="7055">MSRRCAITGKGPMVGNNVSHANNKTKRRFLPNLRTIRVTLEDGTTRKIKVAASTLRTMKKQSN</sequence>
<proteinExistence type="inferred from homology"/>